<accession>Q4X0T4</accession>
<dbReference type="EMBL" id="AAHF01000001">
    <property type="protein sequence ID" value="EAL93531.1"/>
    <property type="molecule type" value="Genomic_DNA"/>
</dbReference>
<dbReference type="RefSeq" id="XP_755569.1">
    <property type="nucleotide sequence ID" value="XM_750476.1"/>
</dbReference>
<dbReference type="SMR" id="Q4X0T4"/>
<dbReference type="EnsemblFungi" id="EAL93531">
    <property type="protein sequence ID" value="EAL93531"/>
    <property type="gene ID" value="AFUA_2G12370"/>
</dbReference>
<dbReference type="GeneID" id="3513306"/>
<dbReference type="KEGG" id="afm:AFUA_2G12370"/>
<dbReference type="VEuPathDB" id="FungiDB:Afu2g12370"/>
<dbReference type="eggNOG" id="ENOG502S7IA">
    <property type="taxonomic scope" value="Eukaryota"/>
</dbReference>
<dbReference type="HOGENOM" id="CLU_047598_3_0_1"/>
<dbReference type="InParanoid" id="Q4X0T4"/>
<dbReference type="OMA" id="AFCAHSA"/>
<dbReference type="OrthoDB" id="5578174at2759"/>
<dbReference type="Proteomes" id="UP000002530">
    <property type="component" value="Chromosome 2"/>
</dbReference>
<dbReference type="GO" id="GO:0005739">
    <property type="term" value="C:mitochondrion"/>
    <property type="evidence" value="ECO:0007669"/>
    <property type="project" value="UniProtKB-SubCell"/>
</dbReference>
<dbReference type="GO" id="GO:0005634">
    <property type="term" value="C:nucleus"/>
    <property type="evidence" value="ECO:0000318"/>
    <property type="project" value="GO_Central"/>
</dbReference>
<dbReference type="InterPro" id="IPR010487">
    <property type="entry name" value="NGRN/Rrg9"/>
</dbReference>
<dbReference type="PANTHER" id="PTHR13475">
    <property type="entry name" value="NEUGRIN"/>
    <property type="match status" value="1"/>
</dbReference>
<dbReference type="PANTHER" id="PTHR13475:SF3">
    <property type="entry name" value="NEUGRIN"/>
    <property type="match status" value="1"/>
</dbReference>
<dbReference type="Pfam" id="PF06413">
    <property type="entry name" value="Neugrin"/>
    <property type="match status" value="1"/>
</dbReference>
<protein>
    <recommendedName>
        <fullName>Required for respiratory growth protein 9, mitochondrial</fullName>
    </recommendedName>
</protein>
<keyword id="KW-0496">Mitochondrion</keyword>
<keyword id="KW-1185">Reference proteome</keyword>
<keyword id="KW-0809">Transit peptide</keyword>
<comment type="function">
    <text evidence="1">Required for respiratory activity and maintenance and expression of the mitochondrial genome.</text>
</comment>
<comment type="subcellular location">
    <subcellularLocation>
        <location evidence="1">Mitochondrion</location>
    </subcellularLocation>
</comment>
<comment type="similarity">
    <text evidence="4">Belongs to the RRG9 family.</text>
</comment>
<name>RRG9_ASPFU</name>
<organism>
    <name type="scientific">Aspergillus fumigatus (strain ATCC MYA-4609 / CBS 101355 / FGSC A1100 / Af293)</name>
    <name type="common">Neosartorya fumigata</name>
    <dbReference type="NCBI Taxonomy" id="330879"/>
    <lineage>
        <taxon>Eukaryota</taxon>
        <taxon>Fungi</taxon>
        <taxon>Dikarya</taxon>
        <taxon>Ascomycota</taxon>
        <taxon>Pezizomycotina</taxon>
        <taxon>Eurotiomycetes</taxon>
        <taxon>Eurotiomycetidae</taxon>
        <taxon>Eurotiales</taxon>
        <taxon>Aspergillaceae</taxon>
        <taxon>Aspergillus</taxon>
        <taxon>Aspergillus subgen. Fumigati</taxon>
    </lineage>
</organism>
<feature type="transit peptide" description="Mitochondrion" evidence="2">
    <location>
        <begin position="1"/>
        <end position="45"/>
    </location>
</feature>
<feature type="chain" id="PRO_0000407939" description="Required for respiratory growth protein 9, mitochondrial">
    <location>
        <begin position="46"/>
        <end position="280"/>
    </location>
</feature>
<feature type="region of interest" description="Disordered" evidence="3">
    <location>
        <begin position="63"/>
        <end position="166"/>
    </location>
</feature>
<feature type="compositionally biased region" description="Polar residues" evidence="3">
    <location>
        <begin position="63"/>
        <end position="88"/>
    </location>
</feature>
<feature type="compositionally biased region" description="Low complexity" evidence="3">
    <location>
        <begin position="101"/>
        <end position="114"/>
    </location>
</feature>
<feature type="compositionally biased region" description="Low complexity" evidence="3">
    <location>
        <begin position="124"/>
        <end position="135"/>
    </location>
</feature>
<feature type="compositionally biased region" description="Basic and acidic residues" evidence="3">
    <location>
        <begin position="138"/>
        <end position="148"/>
    </location>
</feature>
<sequence>MSSSICVASSRLSLPTLLRNVCRSEFTADLGPRSEYKSFFAMQRAALAYRRIRGPRQFSSLTLADDIPTTSKQPPSRAANVSSVSQPGEPTKTGAGEIRASSHPSEVVSSSPRADSAKRKKASAPEATAGAKPAANESSDKKRSEAPRKSSLSILSKSKKKKEPWQIQKEALKKKFKEGWNPPKKLSPDALEGIRHLHAVAPDRFTTPVLAEQFQVSPEAIRRILKSKWRPSPEEMEKRRERWERRHDRIWSQMTELGLRRPKRSAEKFSDVKVLYDKPV</sequence>
<gene>
    <name type="primary">rrg9</name>
    <name type="ORF">AFUA_2G12370</name>
</gene>
<evidence type="ECO:0000250" key="1"/>
<evidence type="ECO:0000255" key="2"/>
<evidence type="ECO:0000256" key="3">
    <source>
        <dbReference type="SAM" id="MobiDB-lite"/>
    </source>
</evidence>
<evidence type="ECO:0000305" key="4"/>
<proteinExistence type="inferred from homology"/>
<reference key="1">
    <citation type="journal article" date="2005" name="Nature">
        <title>Genomic sequence of the pathogenic and allergenic filamentous fungus Aspergillus fumigatus.</title>
        <authorList>
            <person name="Nierman W.C."/>
            <person name="Pain A."/>
            <person name="Anderson M.J."/>
            <person name="Wortman J.R."/>
            <person name="Kim H.S."/>
            <person name="Arroyo J."/>
            <person name="Berriman M."/>
            <person name="Abe K."/>
            <person name="Archer D.B."/>
            <person name="Bermejo C."/>
            <person name="Bennett J.W."/>
            <person name="Bowyer P."/>
            <person name="Chen D."/>
            <person name="Collins M."/>
            <person name="Coulsen R."/>
            <person name="Davies R."/>
            <person name="Dyer P.S."/>
            <person name="Farman M.L."/>
            <person name="Fedorova N."/>
            <person name="Fedorova N.D."/>
            <person name="Feldblyum T.V."/>
            <person name="Fischer R."/>
            <person name="Fosker N."/>
            <person name="Fraser A."/>
            <person name="Garcia J.L."/>
            <person name="Garcia M.J."/>
            <person name="Goble A."/>
            <person name="Goldman G.H."/>
            <person name="Gomi K."/>
            <person name="Griffith-Jones S."/>
            <person name="Gwilliam R."/>
            <person name="Haas B.J."/>
            <person name="Haas H."/>
            <person name="Harris D.E."/>
            <person name="Horiuchi H."/>
            <person name="Huang J."/>
            <person name="Humphray S."/>
            <person name="Jimenez J."/>
            <person name="Keller N."/>
            <person name="Khouri H."/>
            <person name="Kitamoto K."/>
            <person name="Kobayashi T."/>
            <person name="Konzack S."/>
            <person name="Kulkarni R."/>
            <person name="Kumagai T."/>
            <person name="Lafton A."/>
            <person name="Latge J.-P."/>
            <person name="Li W."/>
            <person name="Lord A."/>
            <person name="Lu C."/>
            <person name="Majoros W.H."/>
            <person name="May G.S."/>
            <person name="Miller B.L."/>
            <person name="Mohamoud Y."/>
            <person name="Molina M."/>
            <person name="Monod M."/>
            <person name="Mouyna I."/>
            <person name="Mulligan S."/>
            <person name="Murphy L.D."/>
            <person name="O'Neil S."/>
            <person name="Paulsen I."/>
            <person name="Penalva M.A."/>
            <person name="Pertea M."/>
            <person name="Price C."/>
            <person name="Pritchard B.L."/>
            <person name="Quail M.A."/>
            <person name="Rabbinowitsch E."/>
            <person name="Rawlins N."/>
            <person name="Rajandream M.A."/>
            <person name="Reichard U."/>
            <person name="Renauld H."/>
            <person name="Robson G.D."/>
            <person name="Rodriguez de Cordoba S."/>
            <person name="Rodriguez-Pena J.M."/>
            <person name="Ronning C.M."/>
            <person name="Rutter S."/>
            <person name="Salzberg S.L."/>
            <person name="Sanchez M."/>
            <person name="Sanchez-Ferrero J.C."/>
            <person name="Saunders D."/>
            <person name="Seeger K."/>
            <person name="Squares R."/>
            <person name="Squares S."/>
            <person name="Takeuchi M."/>
            <person name="Tekaia F."/>
            <person name="Turner G."/>
            <person name="Vazquez de Aldana C.R."/>
            <person name="Weidman J."/>
            <person name="White O."/>
            <person name="Woodward J.R."/>
            <person name="Yu J.-H."/>
            <person name="Fraser C.M."/>
            <person name="Galagan J.E."/>
            <person name="Asai K."/>
            <person name="Machida M."/>
            <person name="Hall N."/>
            <person name="Barrell B.G."/>
            <person name="Denning D.W."/>
        </authorList>
    </citation>
    <scope>NUCLEOTIDE SEQUENCE [LARGE SCALE GENOMIC DNA]</scope>
    <source>
        <strain>ATCC MYA-4609 / CBS 101355 / FGSC A1100 / Af293</strain>
    </source>
</reference>